<reference key="1">
    <citation type="submission" date="2009-02" db="EMBL/GenBank/DDBJ databases">
        <title>Vibrio splendidus str. LGP32 complete genome.</title>
        <authorList>
            <person name="Mazel D."/>
            <person name="Le Roux F."/>
        </authorList>
    </citation>
    <scope>NUCLEOTIDE SEQUENCE [LARGE SCALE GENOMIC DNA]</scope>
    <source>
        <strain>LGP32</strain>
    </source>
</reference>
<name>Y3629_VIBA3</name>
<keyword id="KW-0378">Hydrolase</keyword>
<keyword id="KW-0479">Metal-binding</keyword>
<keyword id="KW-0862">Zinc</keyword>
<organism>
    <name type="scientific">Vibrio atlanticus (strain LGP32)</name>
    <name type="common">Vibrio splendidus (strain Mel32)</name>
    <dbReference type="NCBI Taxonomy" id="575788"/>
    <lineage>
        <taxon>Bacteria</taxon>
        <taxon>Pseudomonadati</taxon>
        <taxon>Pseudomonadota</taxon>
        <taxon>Gammaproteobacteria</taxon>
        <taxon>Vibrionales</taxon>
        <taxon>Vibrionaceae</taxon>
        <taxon>Vibrio</taxon>
    </lineage>
</organism>
<accession>B7VR44</accession>
<comment type="cofactor">
    <cofactor evidence="1">
        <name>Zn(2+)</name>
        <dbReference type="ChEBI" id="CHEBI:29105"/>
    </cofactor>
    <text evidence="1">Binds 3 Zn(2+) ions per subunit.</text>
</comment>
<comment type="similarity">
    <text evidence="1">Belongs to the PHP family.</text>
</comment>
<gene>
    <name type="ordered locus">VS_II0429</name>
</gene>
<sequence>MELKVDTHTHTYASGHAYSTLIENAKSAKQNGLAMFCTTDHSESMPGAPHYWFFSNQRVLPRFIEDVAIIRGVESNIMNTQGEIDIHPSVDKNLDWVIASFHEPVFRPSDVATHTEALLNVIKGGRVDALGHLGNPNFDFDFEVVIQCAAEHNVAIEINNTTLKGNSRVGSVDRCYEIARIAKAKGAFITTGSDAHFCIDVGGLDLVSSLLGEVGVDSSKVITHSPQQFLAFLVLRGRQSIAEFSVFE</sequence>
<feature type="chain" id="PRO_1000185436" description="Probable phosphatase VS_II0429">
    <location>
        <begin position="1"/>
        <end position="248"/>
    </location>
</feature>
<feature type="binding site" evidence="1">
    <location>
        <position position="8"/>
    </location>
    <ligand>
        <name>Zn(2+)</name>
        <dbReference type="ChEBI" id="CHEBI:29105"/>
        <label>1</label>
    </ligand>
</feature>
<feature type="binding site" evidence="1">
    <location>
        <position position="10"/>
    </location>
    <ligand>
        <name>Zn(2+)</name>
        <dbReference type="ChEBI" id="CHEBI:29105"/>
        <label>1</label>
    </ligand>
</feature>
<feature type="binding site" evidence="1">
    <location>
        <position position="16"/>
    </location>
    <ligand>
        <name>Zn(2+)</name>
        <dbReference type="ChEBI" id="CHEBI:29105"/>
        <label>2</label>
    </ligand>
</feature>
<feature type="binding site" evidence="1">
    <location>
        <position position="41"/>
    </location>
    <ligand>
        <name>Zn(2+)</name>
        <dbReference type="ChEBI" id="CHEBI:29105"/>
        <label>2</label>
    </ligand>
</feature>
<feature type="binding site" evidence="1">
    <location>
        <position position="74"/>
    </location>
    <ligand>
        <name>Zn(2+)</name>
        <dbReference type="ChEBI" id="CHEBI:29105"/>
        <label>1</label>
    </ligand>
</feature>
<feature type="binding site" evidence="1">
    <location>
        <position position="74"/>
    </location>
    <ligand>
        <name>Zn(2+)</name>
        <dbReference type="ChEBI" id="CHEBI:29105"/>
        <label>3</label>
    </ligand>
</feature>
<feature type="binding site" evidence="1">
    <location>
        <position position="102"/>
    </location>
    <ligand>
        <name>Zn(2+)</name>
        <dbReference type="ChEBI" id="CHEBI:29105"/>
        <label>3</label>
    </ligand>
</feature>
<feature type="binding site" evidence="1">
    <location>
        <position position="132"/>
    </location>
    <ligand>
        <name>Zn(2+)</name>
        <dbReference type="ChEBI" id="CHEBI:29105"/>
        <label>3</label>
    </ligand>
</feature>
<feature type="binding site" evidence="1">
    <location>
        <position position="194"/>
    </location>
    <ligand>
        <name>Zn(2+)</name>
        <dbReference type="ChEBI" id="CHEBI:29105"/>
        <label>1</label>
    </ligand>
</feature>
<feature type="binding site" evidence="1">
    <location>
        <position position="196"/>
    </location>
    <ligand>
        <name>Zn(2+)</name>
        <dbReference type="ChEBI" id="CHEBI:29105"/>
        <label>2</label>
    </ligand>
</feature>
<dbReference type="EC" id="3.1.3.-" evidence="1"/>
<dbReference type="EMBL" id="FM954973">
    <property type="protein sequence ID" value="CAV25921.1"/>
    <property type="molecule type" value="Genomic_DNA"/>
</dbReference>
<dbReference type="SMR" id="B7VR44"/>
<dbReference type="STRING" id="575788.VS_II0429"/>
<dbReference type="KEGG" id="vsp:VS_II0429"/>
<dbReference type="PATRIC" id="fig|575788.5.peg.415"/>
<dbReference type="eggNOG" id="COG1387">
    <property type="taxonomic scope" value="Bacteria"/>
</dbReference>
<dbReference type="HOGENOM" id="CLU_061999_0_1_6"/>
<dbReference type="Proteomes" id="UP000009100">
    <property type="component" value="Chromosome 2"/>
</dbReference>
<dbReference type="GO" id="GO:0005829">
    <property type="term" value="C:cytosol"/>
    <property type="evidence" value="ECO:0007669"/>
    <property type="project" value="TreeGrafter"/>
</dbReference>
<dbReference type="GO" id="GO:0016791">
    <property type="term" value="F:phosphatase activity"/>
    <property type="evidence" value="ECO:0007669"/>
    <property type="project" value="UniProtKB-UniRule"/>
</dbReference>
<dbReference type="GO" id="GO:0008270">
    <property type="term" value="F:zinc ion binding"/>
    <property type="evidence" value="ECO:0007669"/>
    <property type="project" value="UniProtKB-UniRule"/>
</dbReference>
<dbReference type="GO" id="GO:0071978">
    <property type="term" value="P:bacterial-type flagellum-dependent swarming motility"/>
    <property type="evidence" value="ECO:0007669"/>
    <property type="project" value="TreeGrafter"/>
</dbReference>
<dbReference type="CDD" id="cd07437">
    <property type="entry name" value="PHP_HisPPase_Ycdx_like"/>
    <property type="match status" value="1"/>
</dbReference>
<dbReference type="Gene3D" id="3.20.20.140">
    <property type="entry name" value="Metal-dependent hydrolases"/>
    <property type="match status" value="1"/>
</dbReference>
<dbReference type="HAMAP" id="MF_01561">
    <property type="entry name" value="YcdX_phosphat"/>
    <property type="match status" value="1"/>
</dbReference>
<dbReference type="InterPro" id="IPR023710">
    <property type="entry name" value="Phosphatase_YcdX_put"/>
</dbReference>
<dbReference type="InterPro" id="IPR004013">
    <property type="entry name" value="PHP_dom"/>
</dbReference>
<dbReference type="InterPro" id="IPR050243">
    <property type="entry name" value="PHP_phosphatase"/>
</dbReference>
<dbReference type="InterPro" id="IPR003141">
    <property type="entry name" value="Pol/His_phosphatase_N"/>
</dbReference>
<dbReference type="InterPro" id="IPR016195">
    <property type="entry name" value="Pol/histidinol_Pase-like"/>
</dbReference>
<dbReference type="NCBIfam" id="NF006702">
    <property type="entry name" value="PRK09248.1"/>
    <property type="match status" value="1"/>
</dbReference>
<dbReference type="PANTHER" id="PTHR36928">
    <property type="entry name" value="PHOSPHATASE YCDX-RELATED"/>
    <property type="match status" value="1"/>
</dbReference>
<dbReference type="PANTHER" id="PTHR36928:SF1">
    <property type="entry name" value="PHOSPHATASE YCDX-RELATED"/>
    <property type="match status" value="1"/>
</dbReference>
<dbReference type="Pfam" id="PF02811">
    <property type="entry name" value="PHP"/>
    <property type="match status" value="1"/>
</dbReference>
<dbReference type="SMART" id="SM00481">
    <property type="entry name" value="POLIIIAc"/>
    <property type="match status" value="1"/>
</dbReference>
<dbReference type="SUPFAM" id="SSF89550">
    <property type="entry name" value="PHP domain-like"/>
    <property type="match status" value="1"/>
</dbReference>
<evidence type="ECO:0000255" key="1">
    <source>
        <dbReference type="HAMAP-Rule" id="MF_01561"/>
    </source>
</evidence>
<protein>
    <recommendedName>
        <fullName evidence="1">Probable phosphatase VS_II0429</fullName>
        <ecNumber evidence="1">3.1.3.-</ecNumber>
    </recommendedName>
</protein>
<proteinExistence type="inferred from homology"/>